<reference key="1">
    <citation type="journal article" date="2006" name="Proc. Natl. Acad. Sci. U.S.A.">
        <title>The complete genome sequence of Lactobacillus bulgaricus reveals extensive and ongoing reductive evolution.</title>
        <authorList>
            <person name="van de Guchte M."/>
            <person name="Penaud S."/>
            <person name="Grimaldi C."/>
            <person name="Barbe V."/>
            <person name="Bryson K."/>
            <person name="Nicolas P."/>
            <person name="Robert C."/>
            <person name="Oztas S."/>
            <person name="Mangenot S."/>
            <person name="Couloux A."/>
            <person name="Loux V."/>
            <person name="Dervyn R."/>
            <person name="Bossy R."/>
            <person name="Bolotin A."/>
            <person name="Batto J.-M."/>
            <person name="Walunas T."/>
            <person name="Gibrat J.-F."/>
            <person name="Bessieres P."/>
            <person name="Weissenbach J."/>
            <person name="Ehrlich S.D."/>
            <person name="Maguin E."/>
        </authorList>
    </citation>
    <scope>NUCLEOTIDE SEQUENCE [LARGE SCALE GENOMIC DNA]</scope>
    <source>
        <strain>ATCC 11842 / DSM 20081 / BCRC 10696 / JCM 1002 / NBRC 13953 / NCIMB 11778 / NCTC 12712 / WDCM 00102 / Lb 14</strain>
    </source>
</reference>
<keyword id="KW-1185">Reference proteome</keyword>
<keyword id="KW-0687">Ribonucleoprotein</keyword>
<keyword id="KW-0689">Ribosomal protein</keyword>
<keyword id="KW-0694">RNA-binding</keyword>
<keyword id="KW-0699">rRNA-binding</keyword>
<protein>
    <recommendedName>
        <fullName evidence="1">Small ribosomal subunit protein uS15</fullName>
    </recommendedName>
    <alternativeName>
        <fullName evidence="2">30S ribosomal protein S15</fullName>
    </alternativeName>
</protein>
<proteinExistence type="inferred from homology"/>
<accession>Q1GAQ3</accession>
<sequence>MAVSKERKNEIIKEYATHEGDTGSVEVQVAVLTEDINNLTQHMREHSHDHHSYVGLLKKIGHRRNLLRYLQENDLERYRALIARLGLRR</sequence>
<comment type="function">
    <text evidence="1">One of the primary rRNA binding proteins, it binds directly to 16S rRNA where it helps nucleate assembly of the platform of the 30S subunit by binding and bridging several RNA helices of the 16S rRNA.</text>
</comment>
<comment type="function">
    <text evidence="1">Forms an intersubunit bridge (bridge B4) with the 23S rRNA of the 50S subunit in the ribosome.</text>
</comment>
<comment type="subunit">
    <text evidence="1">Part of the 30S ribosomal subunit. Forms a bridge to the 50S subunit in the 70S ribosome, contacting the 23S rRNA.</text>
</comment>
<comment type="similarity">
    <text evidence="1">Belongs to the universal ribosomal protein uS15 family.</text>
</comment>
<dbReference type="EMBL" id="CR954253">
    <property type="protein sequence ID" value="CAI97600.1"/>
    <property type="molecule type" value="Genomic_DNA"/>
</dbReference>
<dbReference type="RefSeq" id="WP_002879084.1">
    <property type="nucleotide sequence ID" value="NZ_JQAV01000001.1"/>
</dbReference>
<dbReference type="SMR" id="Q1GAQ3"/>
<dbReference type="STRING" id="390333.Ldb0773"/>
<dbReference type="GeneID" id="69668755"/>
<dbReference type="KEGG" id="ldb:Ldb0773"/>
<dbReference type="PATRIC" id="fig|390333.13.peg.26"/>
<dbReference type="eggNOG" id="COG0184">
    <property type="taxonomic scope" value="Bacteria"/>
</dbReference>
<dbReference type="HOGENOM" id="CLU_148518_0_0_9"/>
<dbReference type="BioCyc" id="LDEL390333:LDB_RS03410-MONOMER"/>
<dbReference type="Proteomes" id="UP000001259">
    <property type="component" value="Chromosome"/>
</dbReference>
<dbReference type="GO" id="GO:0022627">
    <property type="term" value="C:cytosolic small ribosomal subunit"/>
    <property type="evidence" value="ECO:0007669"/>
    <property type="project" value="TreeGrafter"/>
</dbReference>
<dbReference type="GO" id="GO:0019843">
    <property type="term" value="F:rRNA binding"/>
    <property type="evidence" value="ECO:0007669"/>
    <property type="project" value="UniProtKB-UniRule"/>
</dbReference>
<dbReference type="GO" id="GO:0003735">
    <property type="term" value="F:structural constituent of ribosome"/>
    <property type="evidence" value="ECO:0007669"/>
    <property type="project" value="InterPro"/>
</dbReference>
<dbReference type="GO" id="GO:0006412">
    <property type="term" value="P:translation"/>
    <property type="evidence" value="ECO:0007669"/>
    <property type="project" value="UniProtKB-UniRule"/>
</dbReference>
<dbReference type="CDD" id="cd00353">
    <property type="entry name" value="Ribosomal_S15p_S13e"/>
    <property type="match status" value="1"/>
</dbReference>
<dbReference type="FunFam" id="1.10.287.10:FF:000002">
    <property type="entry name" value="30S ribosomal protein S15"/>
    <property type="match status" value="1"/>
</dbReference>
<dbReference type="Gene3D" id="6.10.250.3130">
    <property type="match status" value="1"/>
</dbReference>
<dbReference type="Gene3D" id="1.10.287.10">
    <property type="entry name" value="S15/NS1, RNA-binding"/>
    <property type="match status" value="1"/>
</dbReference>
<dbReference type="HAMAP" id="MF_01343_B">
    <property type="entry name" value="Ribosomal_uS15_B"/>
    <property type="match status" value="1"/>
</dbReference>
<dbReference type="InterPro" id="IPR000589">
    <property type="entry name" value="Ribosomal_uS15"/>
</dbReference>
<dbReference type="InterPro" id="IPR005290">
    <property type="entry name" value="Ribosomal_uS15_bac-type"/>
</dbReference>
<dbReference type="InterPro" id="IPR009068">
    <property type="entry name" value="uS15_NS1_RNA-bd_sf"/>
</dbReference>
<dbReference type="NCBIfam" id="TIGR00952">
    <property type="entry name" value="S15_bact"/>
    <property type="match status" value="1"/>
</dbReference>
<dbReference type="PANTHER" id="PTHR23321">
    <property type="entry name" value="RIBOSOMAL PROTEIN S15, BACTERIAL AND ORGANELLAR"/>
    <property type="match status" value="1"/>
</dbReference>
<dbReference type="PANTHER" id="PTHR23321:SF26">
    <property type="entry name" value="SMALL RIBOSOMAL SUBUNIT PROTEIN US15M"/>
    <property type="match status" value="1"/>
</dbReference>
<dbReference type="Pfam" id="PF00312">
    <property type="entry name" value="Ribosomal_S15"/>
    <property type="match status" value="1"/>
</dbReference>
<dbReference type="SMART" id="SM01387">
    <property type="entry name" value="Ribosomal_S15"/>
    <property type="match status" value="1"/>
</dbReference>
<dbReference type="SUPFAM" id="SSF47060">
    <property type="entry name" value="S15/NS1 RNA-binding domain"/>
    <property type="match status" value="1"/>
</dbReference>
<feature type="chain" id="PRO_0000255501" description="Small ribosomal subunit protein uS15">
    <location>
        <begin position="1"/>
        <end position="89"/>
    </location>
</feature>
<name>RS15_LACDA</name>
<gene>
    <name evidence="1" type="primary">rpsO</name>
    <name type="ordered locus">Ldb0773</name>
</gene>
<organism>
    <name type="scientific">Lactobacillus delbrueckii subsp. bulgaricus (strain ATCC 11842 / DSM 20081 / BCRC 10696 / JCM 1002 / NBRC 13953 / NCIMB 11778 / NCTC 12712 / WDCM 00102 / Lb 14)</name>
    <dbReference type="NCBI Taxonomy" id="390333"/>
    <lineage>
        <taxon>Bacteria</taxon>
        <taxon>Bacillati</taxon>
        <taxon>Bacillota</taxon>
        <taxon>Bacilli</taxon>
        <taxon>Lactobacillales</taxon>
        <taxon>Lactobacillaceae</taxon>
        <taxon>Lactobacillus</taxon>
    </lineage>
</organism>
<evidence type="ECO:0000255" key="1">
    <source>
        <dbReference type="HAMAP-Rule" id="MF_01343"/>
    </source>
</evidence>
<evidence type="ECO:0000305" key="2"/>